<organism>
    <name type="scientific">Arabidopsis thaliana</name>
    <name type="common">Mouse-ear cress</name>
    <dbReference type="NCBI Taxonomy" id="3702"/>
    <lineage>
        <taxon>Eukaryota</taxon>
        <taxon>Viridiplantae</taxon>
        <taxon>Streptophyta</taxon>
        <taxon>Embryophyta</taxon>
        <taxon>Tracheophyta</taxon>
        <taxon>Spermatophyta</taxon>
        <taxon>Magnoliopsida</taxon>
        <taxon>eudicotyledons</taxon>
        <taxon>Gunneridae</taxon>
        <taxon>Pentapetalae</taxon>
        <taxon>rosids</taxon>
        <taxon>malvids</taxon>
        <taxon>Brassicales</taxon>
        <taxon>Brassicaceae</taxon>
        <taxon>Camelineae</taxon>
        <taxon>Arabidopsis</taxon>
    </lineage>
</organism>
<gene>
    <name type="primary">XBAT32</name>
    <name type="ordered locus">At5g57740</name>
    <name type="ORF">MRI1.10</name>
</gene>
<sequence>MRFLSLVGNSFGCSASGERLVSAARDGDLQEAKALLDYNPRLARYSTFGVRNSPLHYSAAQGHHEIVSLLVESGVDINLRNYRGQTALMQACQHGHWEVVLILILFGANIHRSDYLNGGTALHLAALNGHPRCIRILLSEYIPSVPNCWSLLKNKKTSVAGFDSSVLHEVINRAADGGITPLHVAALNGHIETVQLLLDLGASVTQVTVEDGTTIDLIGAGSTALHYASCGGNTQCCQLLISKGACLAAVNSNGWTPMMVARSWHRNWLEEILNPTTEQPQLHLPNVPSPFLCLPLMSIVNIAQECGWRENDCLTPCRDPCAVCLERKCTVAADGCAHEFCTNCALYLSTTSITSSKTSNVTPGSVPCPLCRNGIVSFTKLPHTTATTRTSTSSRTSISLSFCTCSSDVLDTALLTNPHYSCKPVVSRTGSRTPQSARSSAFRSLSCRRFPPSLCLGGSDVDEPRSRLIGGSYSRSGVGFRRSTSQVEGKRSWFSALNHCVTTGGSAC</sequence>
<proteinExistence type="evidence at protein level"/>
<comment type="function">
    <text evidence="2 3">E3 ubiquitin-protein ligase that mediates ubiquitination of ACC synthases (ACS). Negatively regulates ethylene biosynthesis probably via ubiquitin-dependent degradation of ACS4 and ACS7 enzymes. Regulates lateral root formation and development by controlling ethylene production which inhibits lateral root formation at high concentration.</text>
</comment>
<comment type="catalytic activity">
    <reaction>
        <text>S-ubiquitinyl-[E2 ubiquitin-conjugating enzyme]-L-cysteine + [acceptor protein]-L-lysine = [E2 ubiquitin-conjugating enzyme]-L-cysteine + N(6)-ubiquitinyl-[acceptor protein]-L-lysine.</text>
        <dbReference type="EC" id="2.3.2.27"/>
    </reaction>
</comment>
<comment type="pathway">
    <text>Protein modification; protein ubiquitination.</text>
</comment>
<comment type="subunit">
    <text evidence="3">Interacts with ACS4 and ACS7.</text>
</comment>
<comment type="tissue specificity">
    <text evidence="2">Expressed in the vascular system of primary root, vascular tissue of leaves, stems and anthers.</text>
</comment>
<comment type="induction">
    <text evidence="2">By auxin.</text>
</comment>
<comment type="disruption phenotype">
    <text evidence="2">Delay in development and flowering. Deficiency in lateral root formation.</text>
</comment>
<comment type="sequence caution" evidence="4">
    <conflict type="erroneous gene model prediction">
        <sequence resource="EMBL-CDS" id="BAB09592"/>
    </conflict>
</comment>
<protein>
    <recommendedName>
        <fullName>E3 ubiquitin-protein ligase XBAT32</fullName>
        <ecNumber>2.3.2.27</ecNumber>
    </recommendedName>
    <alternativeName>
        <fullName>Ankyrin repeat domain and RING finger-containing protein XBAT32</fullName>
    </alternativeName>
    <alternativeName>
        <fullName>Protein XB3 homolog 2</fullName>
    </alternativeName>
    <alternativeName>
        <fullName>RING-type E3 ubiquitin transferase XBAT32</fullName>
    </alternativeName>
</protein>
<reference key="1">
    <citation type="journal article" date="1999" name="DNA Res.">
        <title>Structural analysis of Arabidopsis thaliana chromosome 5. IX. Sequence features of the regions of 1,011,550 bp covered by seventeen P1 and TAC clones.</title>
        <authorList>
            <person name="Kaneko T."/>
            <person name="Katoh T."/>
            <person name="Sato S."/>
            <person name="Nakamura Y."/>
            <person name="Asamizu E."/>
            <person name="Kotani H."/>
            <person name="Miyajima N."/>
            <person name="Tabata S."/>
        </authorList>
    </citation>
    <scope>NUCLEOTIDE SEQUENCE [LARGE SCALE GENOMIC DNA]</scope>
    <source>
        <strain>cv. Columbia</strain>
    </source>
</reference>
<reference key="2">
    <citation type="journal article" date="2017" name="Plant J.">
        <title>Araport11: a complete reannotation of the Arabidopsis thaliana reference genome.</title>
        <authorList>
            <person name="Cheng C.Y."/>
            <person name="Krishnakumar V."/>
            <person name="Chan A.P."/>
            <person name="Thibaud-Nissen F."/>
            <person name="Schobel S."/>
            <person name="Town C.D."/>
        </authorList>
    </citation>
    <scope>GENOME REANNOTATION</scope>
    <source>
        <strain>cv. Columbia</strain>
    </source>
</reference>
<reference key="3">
    <citation type="submission" date="2004-03" db="EMBL/GenBank/DDBJ databases">
        <title>Arabidopsis ORF clones.</title>
        <authorList>
            <person name="Cheuk R.F."/>
            <person name="Chen H."/>
            <person name="Kim C.J."/>
            <person name="Shinn P."/>
            <person name="Ecker J.R."/>
        </authorList>
    </citation>
    <scope>NUCLEOTIDE SEQUENCE [LARGE SCALE MRNA]</scope>
    <source>
        <strain>cv. Columbia</strain>
    </source>
</reference>
<reference key="4">
    <citation type="journal article" date="2004" name="Plant J.">
        <title>The ubiquitin ligase XBAT32 regulates lateral root development in Arabidopsis.</title>
        <authorList>
            <person name="Nodzon L.A."/>
            <person name="Xu W.H."/>
            <person name="Wang Y."/>
            <person name="Pi L.Y."/>
            <person name="Chakrabarty P.K."/>
            <person name="Song W.Y."/>
        </authorList>
    </citation>
    <scope>FUNCTION</scope>
    <scope>TISSUE SPECIFICITY</scope>
    <scope>INDUCTION</scope>
    <scope>DISRUPTION PHENOTYPE</scope>
</reference>
<reference key="5">
    <citation type="journal article" date="2010" name="Plant Physiol.">
        <title>Arabidopsis RING E3 ligase XBAT32 regulates lateral root production through its role in ethylene biosynthesis.</title>
        <authorList>
            <person name="Prasad M.E."/>
            <person name="Schofield A."/>
            <person name="Lyzenga W."/>
            <person name="Liu H."/>
            <person name="Stone S.L."/>
        </authorList>
    </citation>
    <scope>FUNCTION</scope>
    <scope>INTERACTION WITH ACS4 AND ACS7</scope>
</reference>
<keyword id="KW-0040">ANK repeat</keyword>
<keyword id="KW-0217">Developmental protein</keyword>
<keyword id="KW-0479">Metal-binding</keyword>
<keyword id="KW-1185">Reference proteome</keyword>
<keyword id="KW-0677">Repeat</keyword>
<keyword id="KW-0808">Transferase</keyword>
<keyword id="KW-0833">Ubl conjugation pathway</keyword>
<keyword id="KW-0862">Zinc</keyword>
<keyword id="KW-0863">Zinc-finger</keyword>
<accession>Q6NLQ8</accession>
<accession>Q9FHG9</accession>
<feature type="chain" id="PRO_0000395740" description="E3 ubiquitin-protein ligase XBAT32">
    <location>
        <begin position="1"/>
        <end position="508"/>
    </location>
</feature>
<feature type="repeat" description="ANK 1">
    <location>
        <begin position="50"/>
        <end position="79"/>
    </location>
</feature>
<feature type="repeat" description="ANK 2">
    <location>
        <begin position="83"/>
        <end position="112"/>
    </location>
</feature>
<feature type="repeat" description="ANK 3">
    <location>
        <begin position="117"/>
        <end position="147"/>
    </location>
</feature>
<feature type="repeat" description="ANK 4">
    <location>
        <begin position="177"/>
        <end position="206"/>
    </location>
</feature>
<feature type="repeat" description="ANK 5">
    <location>
        <begin position="220"/>
        <end position="249"/>
    </location>
</feature>
<feature type="zinc finger region" description="RING-type" evidence="1">
    <location>
        <begin position="321"/>
        <end position="372"/>
    </location>
</feature>
<name>XB32_ARATH</name>
<evidence type="ECO:0000255" key="1">
    <source>
        <dbReference type="PROSITE-ProRule" id="PRU00175"/>
    </source>
</evidence>
<evidence type="ECO:0000269" key="2">
    <source>
    </source>
</evidence>
<evidence type="ECO:0000269" key="3">
    <source>
    </source>
</evidence>
<evidence type="ECO:0000305" key="4"/>
<dbReference type="EC" id="2.3.2.27"/>
<dbReference type="EMBL" id="AB018118">
    <property type="protein sequence ID" value="BAB09592.1"/>
    <property type="status" value="ALT_SEQ"/>
    <property type="molecule type" value="Genomic_DNA"/>
</dbReference>
<dbReference type="EMBL" id="CP002688">
    <property type="protein sequence ID" value="AED96944.1"/>
    <property type="molecule type" value="Genomic_DNA"/>
</dbReference>
<dbReference type="EMBL" id="BT011688">
    <property type="protein sequence ID" value="AAS49051.1"/>
    <property type="molecule type" value="mRNA"/>
</dbReference>
<dbReference type="EMBL" id="BT012272">
    <property type="protein sequence ID" value="AAS76759.1"/>
    <property type="molecule type" value="mRNA"/>
</dbReference>
<dbReference type="RefSeq" id="NP_200582.3">
    <property type="nucleotide sequence ID" value="NM_125157.3"/>
</dbReference>
<dbReference type="SMR" id="Q6NLQ8"/>
<dbReference type="BioGRID" id="21126">
    <property type="interactions" value="4"/>
</dbReference>
<dbReference type="FunCoup" id="Q6NLQ8">
    <property type="interactions" value="370"/>
</dbReference>
<dbReference type="STRING" id="3702.Q6NLQ8"/>
<dbReference type="GlyGen" id="Q6NLQ8">
    <property type="glycosylation" value="1 site"/>
</dbReference>
<dbReference type="PaxDb" id="3702-AT5G57740.1"/>
<dbReference type="ProteomicsDB" id="242402"/>
<dbReference type="EnsemblPlants" id="AT5G57740.1">
    <property type="protein sequence ID" value="AT5G57740.1"/>
    <property type="gene ID" value="AT5G57740"/>
</dbReference>
<dbReference type="GeneID" id="835882"/>
<dbReference type="Gramene" id="AT5G57740.1">
    <property type="protein sequence ID" value="AT5G57740.1"/>
    <property type="gene ID" value="AT5G57740"/>
</dbReference>
<dbReference type="KEGG" id="ath:AT5G57740"/>
<dbReference type="Araport" id="AT5G57740"/>
<dbReference type="TAIR" id="AT5G57740">
    <property type="gene designation" value="XBAT32"/>
</dbReference>
<dbReference type="eggNOG" id="ENOG502QR1Y">
    <property type="taxonomic scope" value="Eukaryota"/>
</dbReference>
<dbReference type="HOGENOM" id="CLU_035461_0_0_1"/>
<dbReference type="InParanoid" id="Q6NLQ8"/>
<dbReference type="OMA" id="CMGAPDT"/>
<dbReference type="PhylomeDB" id="Q6NLQ8"/>
<dbReference type="BRENDA" id="2.3.2.27">
    <property type="organism ID" value="399"/>
</dbReference>
<dbReference type="UniPathway" id="UPA00143"/>
<dbReference type="PRO" id="PR:Q6NLQ8"/>
<dbReference type="Proteomes" id="UP000006548">
    <property type="component" value="Chromosome 5"/>
</dbReference>
<dbReference type="ExpressionAtlas" id="Q6NLQ8">
    <property type="expression patterns" value="baseline and differential"/>
</dbReference>
<dbReference type="GO" id="GO:0004842">
    <property type="term" value="F:ubiquitin-protein transferase activity"/>
    <property type="evidence" value="ECO:0000314"/>
    <property type="project" value="UniProtKB"/>
</dbReference>
<dbReference type="GO" id="GO:0008270">
    <property type="term" value="F:zinc ion binding"/>
    <property type="evidence" value="ECO:0007669"/>
    <property type="project" value="UniProtKB-KW"/>
</dbReference>
<dbReference type="GO" id="GO:0010311">
    <property type="term" value="P:lateral root formation"/>
    <property type="evidence" value="ECO:0000315"/>
    <property type="project" value="UniProtKB"/>
</dbReference>
<dbReference type="GO" id="GO:0010366">
    <property type="term" value="P:negative regulation of ethylene biosynthetic process"/>
    <property type="evidence" value="ECO:0000315"/>
    <property type="project" value="UniProtKB"/>
</dbReference>
<dbReference type="GO" id="GO:0051865">
    <property type="term" value="P:protein autoubiquitination"/>
    <property type="evidence" value="ECO:0000314"/>
    <property type="project" value="UniProtKB"/>
</dbReference>
<dbReference type="GO" id="GO:0016567">
    <property type="term" value="P:protein ubiquitination"/>
    <property type="evidence" value="ECO:0000314"/>
    <property type="project" value="UniProtKB"/>
</dbReference>
<dbReference type="GO" id="GO:0009733">
    <property type="term" value="P:response to auxin"/>
    <property type="evidence" value="ECO:0000270"/>
    <property type="project" value="UniProtKB"/>
</dbReference>
<dbReference type="GO" id="GO:0006511">
    <property type="term" value="P:ubiquitin-dependent protein catabolic process"/>
    <property type="evidence" value="ECO:0000314"/>
    <property type="project" value="TAIR"/>
</dbReference>
<dbReference type="FunFam" id="1.25.40.20:FF:000506">
    <property type="entry name" value="E3 ubiquitin-protein ligase XBAT32"/>
    <property type="match status" value="1"/>
</dbReference>
<dbReference type="Gene3D" id="1.25.40.20">
    <property type="entry name" value="Ankyrin repeat-containing domain"/>
    <property type="match status" value="2"/>
</dbReference>
<dbReference type="Gene3D" id="3.30.40.10">
    <property type="entry name" value="Zinc/RING finger domain, C3HC4 (zinc finger)"/>
    <property type="match status" value="1"/>
</dbReference>
<dbReference type="InterPro" id="IPR002110">
    <property type="entry name" value="Ankyrin_rpt"/>
</dbReference>
<dbReference type="InterPro" id="IPR036770">
    <property type="entry name" value="Ankyrin_rpt-contain_sf"/>
</dbReference>
<dbReference type="InterPro" id="IPR056760">
    <property type="entry name" value="RING_XB3-like"/>
</dbReference>
<dbReference type="InterPro" id="IPR001841">
    <property type="entry name" value="Znf_RING"/>
</dbReference>
<dbReference type="InterPro" id="IPR013083">
    <property type="entry name" value="Znf_RING/FYVE/PHD"/>
</dbReference>
<dbReference type="InterPro" id="IPR017907">
    <property type="entry name" value="Znf_RING_CS"/>
</dbReference>
<dbReference type="PANTHER" id="PTHR24173">
    <property type="entry name" value="ANKYRIN REPEAT CONTAINING"/>
    <property type="match status" value="1"/>
</dbReference>
<dbReference type="PANTHER" id="PTHR24173:SF83">
    <property type="entry name" value="SOCS BOX DOMAIN-CONTAINING PROTEIN"/>
    <property type="match status" value="1"/>
</dbReference>
<dbReference type="Pfam" id="PF00023">
    <property type="entry name" value="Ank"/>
    <property type="match status" value="2"/>
</dbReference>
<dbReference type="Pfam" id="PF12796">
    <property type="entry name" value="Ank_2"/>
    <property type="match status" value="2"/>
</dbReference>
<dbReference type="Pfam" id="PF24921">
    <property type="entry name" value="RING_XB3-XBAT31"/>
    <property type="match status" value="1"/>
</dbReference>
<dbReference type="PRINTS" id="PR01415">
    <property type="entry name" value="ANKYRIN"/>
</dbReference>
<dbReference type="SMART" id="SM00248">
    <property type="entry name" value="ANK"/>
    <property type="match status" value="5"/>
</dbReference>
<dbReference type="SMART" id="SM00184">
    <property type="entry name" value="RING"/>
    <property type="match status" value="1"/>
</dbReference>
<dbReference type="SUPFAM" id="SSF48403">
    <property type="entry name" value="Ankyrin repeat"/>
    <property type="match status" value="1"/>
</dbReference>
<dbReference type="SUPFAM" id="SSF57850">
    <property type="entry name" value="RING/U-box"/>
    <property type="match status" value="1"/>
</dbReference>
<dbReference type="PROSITE" id="PS50297">
    <property type="entry name" value="ANK_REP_REGION"/>
    <property type="match status" value="1"/>
</dbReference>
<dbReference type="PROSITE" id="PS50088">
    <property type="entry name" value="ANK_REPEAT"/>
    <property type="match status" value="5"/>
</dbReference>
<dbReference type="PROSITE" id="PS00518">
    <property type="entry name" value="ZF_RING_1"/>
    <property type="match status" value="1"/>
</dbReference>
<dbReference type="PROSITE" id="PS50089">
    <property type="entry name" value="ZF_RING_2"/>
    <property type="match status" value="1"/>
</dbReference>